<proteinExistence type="inferred from homology"/>
<feature type="chain" id="PRO_1000063449" description="Histidine biosynthesis bifunctional protein HisB">
    <location>
        <begin position="1"/>
        <end position="355"/>
    </location>
</feature>
<feature type="region of interest" description="Histidinol-phosphatase" evidence="1">
    <location>
        <begin position="1"/>
        <end position="166"/>
    </location>
</feature>
<feature type="region of interest" description="Imidazoleglycerol-phosphate dehydratase" evidence="1">
    <location>
        <begin position="167"/>
        <end position="355"/>
    </location>
</feature>
<feature type="active site" description="Nucleophile" evidence="1">
    <location>
        <position position="9"/>
    </location>
</feature>
<feature type="active site" description="Proton donor" evidence="1">
    <location>
        <position position="11"/>
    </location>
</feature>
<feature type="binding site" evidence="1">
    <location>
        <position position="9"/>
    </location>
    <ligand>
        <name>Mg(2+)</name>
        <dbReference type="ChEBI" id="CHEBI:18420"/>
    </ligand>
</feature>
<feature type="binding site" evidence="1">
    <location>
        <position position="11"/>
    </location>
    <ligand>
        <name>Mg(2+)</name>
        <dbReference type="ChEBI" id="CHEBI:18420"/>
    </ligand>
</feature>
<feature type="binding site" evidence="1">
    <location>
        <position position="93"/>
    </location>
    <ligand>
        <name>Zn(2+)</name>
        <dbReference type="ChEBI" id="CHEBI:29105"/>
    </ligand>
</feature>
<feature type="binding site" evidence="1">
    <location>
        <position position="95"/>
    </location>
    <ligand>
        <name>Zn(2+)</name>
        <dbReference type="ChEBI" id="CHEBI:29105"/>
    </ligand>
</feature>
<feature type="binding site" evidence="1">
    <location>
        <position position="101"/>
    </location>
    <ligand>
        <name>Zn(2+)</name>
        <dbReference type="ChEBI" id="CHEBI:29105"/>
    </ligand>
</feature>
<feature type="binding site" evidence="1">
    <location>
        <position position="103"/>
    </location>
    <ligand>
        <name>Zn(2+)</name>
        <dbReference type="ChEBI" id="CHEBI:29105"/>
    </ligand>
</feature>
<feature type="binding site" evidence="1">
    <location>
        <position position="130"/>
    </location>
    <ligand>
        <name>Mg(2+)</name>
        <dbReference type="ChEBI" id="CHEBI:18420"/>
    </ligand>
</feature>
<gene>
    <name evidence="1" type="primary">hisB</name>
    <name type="ordered locus">SG1127</name>
</gene>
<organism>
    <name type="scientific">Sodalis glossinidius (strain morsitans)</name>
    <dbReference type="NCBI Taxonomy" id="343509"/>
    <lineage>
        <taxon>Bacteria</taxon>
        <taxon>Pseudomonadati</taxon>
        <taxon>Pseudomonadota</taxon>
        <taxon>Gammaproteobacteria</taxon>
        <taxon>Enterobacterales</taxon>
        <taxon>Bruguierivoracaceae</taxon>
        <taxon>Sodalis</taxon>
    </lineage>
</organism>
<dbReference type="EC" id="3.1.3.15" evidence="1"/>
<dbReference type="EC" id="4.2.1.19" evidence="1"/>
<dbReference type="EMBL" id="AP008232">
    <property type="protein sequence ID" value="BAE74402.1"/>
    <property type="molecule type" value="Genomic_DNA"/>
</dbReference>
<dbReference type="RefSeq" id="WP_011410962.1">
    <property type="nucleotide sequence ID" value="NC_007712.1"/>
</dbReference>
<dbReference type="SMR" id="Q2NTX3"/>
<dbReference type="STRING" id="343509.SG1127"/>
<dbReference type="KEGG" id="sgl:SG1127"/>
<dbReference type="eggNOG" id="COG0131">
    <property type="taxonomic scope" value="Bacteria"/>
</dbReference>
<dbReference type="eggNOG" id="COG0241">
    <property type="taxonomic scope" value="Bacteria"/>
</dbReference>
<dbReference type="HOGENOM" id="CLU_044308_0_0_6"/>
<dbReference type="OrthoDB" id="9790411at2"/>
<dbReference type="BioCyc" id="SGLO343509:SGP1_RS09660-MONOMER"/>
<dbReference type="UniPathway" id="UPA00031">
    <property type="reaction ID" value="UER00011"/>
</dbReference>
<dbReference type="UniPathway" id="UPA00031">
    <property type="reaction ID" value="UER00013"/>
</dbReference>
<dbReference type="Proteomes" id="UP000001932">
    <property type="component" value="Chromosome"/>
</dbReference>
<dbReference type="GO" id="GO:0005737">
    <property type="term" value="C:cytoplasm"/>
    <property type="evidence" value="ECO:0007669"/>
    <property type="project" value="UniProtKB-SubCell"/>
</dbReference>
<dbReference type="GO" id="GO:0004401">
    <property type="term" value="F:histidinol-phosphatase activity"/>
    <property type="evidence" value="ECO:0007669"/>
    <property type="project" value="UniProtKB-UniRule"/>
</dbReference>
<dbReference type="GO" id="GO:0004424">
    <property type="term" value="F:imidazoleglycerol-phosphate dehydratase activity"/>
    <property type="evidence" value="ECO:0007669"/>
    <property type="project" value="UniProtKB-UniRule"/>
</dbReference>
<dbReference type="GO" id="GO:0046872">
    <property type="term" value="F:metal ion binding"/>
    <property type="evidence" value="ECO:0007669"/>
    <property type="project" value="UniProtKB-KW"/>
</dbReference>
<dbReference type="GO" id="GO:0000105">
    <property type="term" value="P:L-histidine biosynthetic process"/>
    <property type="evidence" value="ECO:0007669"/>
    <property type="project" value="UniProtKB-UniRule"/>
</dbReference>
<dbReference type="CDD" id="cd07503">
    <property type="entry name" value="HAD_HisB-N"/>
    <property type="match status" value="1"/>
</dbReference>
<dbReference type="CDD" id="cd07914">
    <property type="entry name" value="IGPD"/>
    <property type="match status" value="1"/>
</dbReference>
<dbReference type="FunFam" id="3.40.50.1000:FF:000061">
    <property type="entry name" value="Histidine biosynthesis bifunctional protein HisB"/>
    <property type="match status" value="1"/>
</dbReference>
<dbReference type="FunFam" id="3.30.230.40:FF:000001">
    <property type="entry name" value="Imidazoleglycerol-phosphate dehydratase HisB"/>
    <property type="match status" value="1"/>
</dbReference>
<dbReference type="FunFam" id="3.30.230.40:FF:000003">
    <property type="entry name" value="Imidazoleglycerol-phosphate dehydratase HisB"/>
    <property type="match status" value="1"/>
</dbReference>
<dbReference type="Gene3D" id="3.40.50.1000">
    <property type="entry name" value="HAD superfamily/HAD-like"/>
    <property type="match status" value="1"/>
</dbReference>
<dbReference type="Gene3D" id="3.30.230.40">
    <property type="entry name" value="Imidazole glycerol phosphate dehydratase, domain 1"/>
    <property type="match status" value="2"/>
</dbReference>
<dbReference type="HAMAP" id="MF_01022">
    <property type="entry name" value="Bifunc_HisB"/>
    <property type="match status" value="1"/>
</dbReference>
<dbReference type="HAMAP" id="MF_00076">
    <property type="entry name" value="HisB"/>
    <property type="match status" value="1"/>
</dbReference>
<dbReference type="InterPro" id="IPR036412">
    <property type="entry name" value="HAD-like_sf"/>
</dbReference>
<dbReference type="InterPro" id="IPR006549">
    <property type="entry name" value="HAD-SF_hydro_IIIA"/>
</dbReference>
<dbReference type="InterPro" id="IPR023214">
    <property type="entry name" value="HAD_sf"/>
</dbReference>
<dbReference type="InterPro" id="IPR020566">
    <property type="entry name" value="His_synth_bifunc_HisB"/>
</dbReference>
<dbReference type="InterPro" id="IPR005954">
    <property type="entry name" value="HisB_N"/>
</dbReference>
<dbReference type="InterPro" id="IPR006543">
    <property type="entry name" value="Histidinol-phos"/>
</dbReference>
<dbReference type="InterPro" id="IPR038494">
    <property type="entry name" value="IGPD_sf"/>
</dbReference>
<dbReference type="InterPro" id="IPR000807">
    <property type="entry name" value="ImidazoleglycerolP_deHydtase"/>
</dbReference>
<dbReference type="InterPro" id="IPR020565">
    <property type="entry name" value="ImidazoleglycerP_deHydtase_CS"/>
</dbReference>
<dbReference type="InterPro" id="IPR020568">
    <property type="entry name" value="Ribosomal_Su5_D2-typ_SF"/>
</dbReference>
<dbReference type="NCBIfam" id="TIGR01662">
    <property type="entry name" value="HAD-SF-IIIA"/>
    <property type="match status" value="1"/>
</dbReference>
<dbReference type="NCBIfam" id="TIGR01261">
    <property type="entry name" value="hisB_Nterm"/>
    <property type="match status" value="1"/>
</dbReference>
<dbReference type="NCBIfam" id="TIGR01656">
    <property type="entry name" value="Histidinol-ppas"/>
    <property type="match status" value="1"/>
</dbReference>
<dbReference type="NCBIfam" id="NF002111">
    <property type="entry name" value="PRK00951.2-1"/>
    <property type="match status" value="1"/>
</dbReference>
<dbReference type="NCBIfam" id="NF002114">
    <property type="entry name" value="PRK00951.2-4"/>
    <property type="match status" value="1"/>
</dbReference>
<dbReference type="NCBIfam" id="NF003937">
    <property type="entry name" value="PRK05446.1"/>
    <property type="match status" value="1"/>
</dbReference>
<dbReference type="PANTHER" id="PTHR23133:SF2">
    <property type="entry name" value="IMIDAZOLEGLYCEROL-PHOSPHATE DEHYDRATASE"/>
    <property type="match status" value="1"/>
</dbReference>
<dbReference type="PANTHER" id="PTHR23133">
    <property type="entry name" value="IMIDAZOLEGLYCEROL-PHOSPHATE DEHYDRATASE HIS7"/>
    <property type="match status" value="1"/>
</dbReference>
<dbReference type="Pfam" id="PF13242">
    <property type="entry name" value="Hydrolase_like"/>
    <property type="match status" value="1"/>
</dbReference>
<dbReference type="Pfam" id="PF00475">
    <property type="entry name" value="IGPD"/>
    <property type="match status" value="1"/>
</dbReference>
<dbReference type="SUPFAM" id="SSF56784">
    <property type="entry name" value="HAD-like"/>
    <property type="match status" value="1"/>
</dbReference>
<dbReference type="SUPFAM" id="SSF54211">
    <property type="entry name" value="Ribosomal protein S5 domain 2-like"/>
    <property type="match status" value="2"/>
</dbReference>
<dbReference type="PROSITE" id="PS00954">
    <property type="entry name" value="IGP_DEHYDRATASE_1"/>
    <property type="match status" value="1"/>
</dbReference>
<dbReference type="PROSITE" id="PS00955">
    <property type="entry name" value="IGP_DEHYDRATASE_2"/>
    <property type="match status" value="1"/>
</dbReference>
<name>HIS7_SODGM</name>
<reference key="1">
    <citation type="journal article" date="2006" name="Genome Res.">
        <title>Massive genome erosion and functional adaptations provide insights into the symbiotic lifestyle of Sodalis glossinidius in the tsetse host.</title>
        <authorList>
            <person name="Toh H."/>
            <person name="Weiss B.L."/>
            <person name="Perkin S.A.H."/>
            <person name="Yamashita A."/>
            <person name="Oshima K."/>
            <person name="Hattori M."/>
            <person name="Aksoy S."/>
        </authorList>
    </citation>
    <scope>NUCLEOTIDE SEQUENCE [LARGE SCALE GENOMIC DNA]</scope>
    <source>
        <strain>morsitans</strain>
    </source>
</reference>
<accession>Q2NTX3</accession>
<keyword id="KW-0028">Amino-acid biosynthesis</keyword>
<keyword id="KW-0963">Cytoplasm</keyword>
<keyword id="KW-0368">Histidine biosynthesis</keyword>
<keyword id="KW-0378">Hydrolase</keyword>
<keyword id="KW-0456">Lyase</keyword>
<keyword id="KW-0460">Magnesium</keyword>
<keyword id="KW-0479">Metal-binding</keyword>
<keyword id="KW-0511">Multifunctional enzyme</keyword>
<keyword id="KW-0862">Zinc</keyword>
<protein>
    <recommendedName>
        <fullName evidence="1">Histidine biosynthesis bifunctional protein HisB</fullName>
    </recommendedName>
    <domain>
        <recommendedName>
            <fullName evidence="1">Histidinol-phosphatase</fullName>
            <ecNumber evidence="1">3.1.3.15</ecNumber>
        </recommendedName>
    </domain>
    <domain>
        <recommendedName>
            <fullName evidence="1">Imidazoleglycerol-phosphate dehydratase</fullName>
            <shortName evidence="1">IGPD</shortName>
            <ecNumber evidence="1">4.2.1.19</ecNumber>
        </recommendedName>
    </domain>
</protein>
<comment type="catalytic activity">
    <reaction evidence="1">
        <text>D-erythro-1-(imidazol-4-yl)glycerol 3-phosphate = 3-(imidazol-4-yl)-2-oxopropyl phosphate + H2O</text>
        <dbReference type="Rhea" id="RHEA:11040"/>
        <dbReference type="ChEBI" id="CHEBI:15377"/>
        <dbReference type="ChEBI" id="CHEBI:57766"/>
        <dbReference type="ChEBI" id="CHEBI:58278"/>
        <dbReference type="EC" id="4.2.1.19"/>
    </reaction>
</comment>
<comment type="catalytic activity">
    <reaction evidence="1">
        <text>L-histidinol phosphate + H2O = L-histidinol + phosphate</text>
        <dbReference type="Rhea" id="RHEA:14465"/>
        <dbReference type="ChEBI" id="CHEBI:15377"/>
        <dbReference type="ChEBI" id="CHEBI:43474"/>
        <dbReference type="ChEBI" id="CHEBI:57699"/>
        <dbReference type="ChEBI" id="CHEBI:57980"/>
        <dbReference type="EC" id="3.1.3.15"/>
    </reaction>
</comment>
<comment type="cofactor">
    <cofactor evidence="1">
        <name>Mg(2+)</name>
        <dbReference type="ChEBI" id="CHEBI:18420"/>
    </cofactor>
</comment>
<comment type="cofactor">
    <cofactor evidence="1">
        <name>Zn(2+)</name>
        <dbReference type="ChEBI" id="CHEBI:29105"/>
    </cofactor>
</comment>
<comment type="pathway">
    <text evidence="1">Amino-acid biosynthesis; L-histidine biosynthesis; L-histidine from 5-phospho-alpha-D-ribose 1-diphosphate: step 6/9.</text>
</comment>
<comment type="pathway">
    <text evidence="1">Amino-acid biosynthesis; L-histidine biosynthesis; L-histidine from 5-phospho-alpha-D-ribose 1-diphosphate: step 8/9.</text>
</comment>
<comment type="subcellular location">
    <subcellularLocation>
        <location evidence="1">Cytoplasm</location>
    </subcellularLocation>
</comment>
<comment type="similarity">
    <text evidence="1">In the N-terminal section; belongs to the histidinol-phosphatase family.</text>
</comment>
<comment type="similarity">
    <text evidence="1">In the C-terminal section; belongs to the imidazoleglycerol-phosphate dehydratase family.</text>
</comment>
<evidence type="ECO:0000255" key="1">
    <source>
        <dbReference type="HAMAP-Rule" id="MF_01022"/>
    </source>
</evidence>
<sequence>MNQKVLFIDRDGTLINEPPADFQVDRMDKLALEPGVIPVLLALQKAGFRLVMITNQDGLGTTSFPQADFDGPHDLMMAIFTSQGIVFDEVLICPHLPTDGCACRKPQTGIVTPWLKEHALDSAHSYVIGDRETDMALAANMGITGLRYQRASLNWPAIGEQLTRSDRHARVNRVTRETAIDVEVWLDREGDSRINTGIGFFDHMLDQIATHGGLRINIAVKGDLHIDDHHTVEDTALALGEALNKALGDKRGIGRFGFVLPMDECLARCALDISGRPHLEYKAKYSFQRVGDLSTEMVEHFFRSLSYAMACTLHLRTKGKNDHHRVESLFKAFGRTLRQAIRVEGDTLPSSKGVL</sequence>